<comment type="function">
    <text evidence="4">Required for normal spindle assembly (PubMed:19182792). Plays a key role in mother-centriole-dependent centriole duplication (PubMed:19182792). Plays a role in DNA damage response (PubMed:19182792). Following DNA damage, such as double-strand breaks (DSBs), is removed from centrosomes; this leads to the inactivation of spindle assembly and delay in mitotic progression (PubMed:19182792).</text>
</comment>
<comment type="subcellular location">
    <subcellularLocation>
        <location evidence="2">Cytoplasm</location>
        <location evidence="2">Cytoskeleton</location>
        <location evidence="2">Microtubule organizing center</location>
        <location evidence="2">Centrosome</location>
        <location evidence="2">Centriole</location>
    </subcellularLocation>
    <subcellularLocation>
        <location evidence="1">Cytoplasm</location>
        <location evidence="1">Cytoskeleton</location>
        <location evidence="1">Microtubule organizing center</location>
        <location evidence="1">Centrosome</location>
    </subcellularLocation>
</comment>
<comment type="PTM">
    <text evidence="4">Phosphorylation at Ser-560 by atm and atr promotes its delocalization from the centrosome and impairs its ability to promote centrosome dependent spindle assembly.</text>
</comment>
<comment type="similarity">
    <text evidence="5">Belongs to the CEP63 family.</text>
</comment>
<name>CE63A_XENLA</name>
<keyword id="KW-0131">Cell cycle</keyword>
<keyword id="KW-0132">Cell division</keyword>
<keyword id="KW-0175">Coiled coil</keyword>
<keyword id="KW-0963">Cytoplasm</keyword>
<keyword id="KW-0206">Cytoskeleton</keyword>
<keyword id="KW-0227">DNA damage</keyword>
<keyword id="KW-0498">Mitosis</keyword>
<keyword id="KW-0597">Phosphoprotein</keyword>
<keyword id="KW-1185">Reference proteome</keyword>
<feature type="chain" id="PRO_0000381809" description="Centrosomal protein of 63 kDa-A">
    <location>
        <begin position="1"/>
        <end position="649"/>
    </location>
</feature>
<feature type="coiled-coil region" evidence="3">
    <location>
        <begin position="19"/>
        <end position="185"/>
    </location>
</feature>
<feature type="coiled-coil region" evidence="3">
    <location>
        <begin position="222"/>
        <end position="556"/>
    </location>
</feature>
<feature type="coiled-coil region" evidence="3">
    <location>
        <begin position="612"/>
        <end position="645"/>
    </location>
</feature>
<feature type="modified residue" description="Phosphoserine; by atm and atr" evidence="4">
    <location>
        <position position="560"/>
    </location>
</feature>
<feature type="mutagenesis site" description="Abolishes phosphorylation by atm and atr preventing spindle assembly inactivation." evidence="4">
    <original>S</original>
    <variation>A</variation>
    <location>
        <position position="560"/>
    </location>
</feature>
<proteinExistence type="evidence at protein level"/>
<evidence type="ECO:0000250" key="1">
    <source>
        <dbReference type="UniProtKB" id="P0CB05"/>
    </source>
</evidence>
<evidence type="ECO:0000250" key="2">
    <source>
        <dbReference type="UniProtKB" id="Q96MT8"/>
    </source>
</evidence>
<evidence type="ECO:0000255" key="3"/>
<evidence type="ECO:0000269" key="4">
    <source>
    </source>
</evidence>
<evidence type="ECO:0000305" key="5"/>
<dbReference type="EMBL" id="FJ464988">
    <property type="protein sequence ID" value="ACM45719.1"/>
    <property type="molecule type" value="mRNA"/>
</dbReference>
<dbReference type="RefSeq" id="NP_001088987.2">
    <property type="nucleotide sequence ID" value="NM_001095518.2"/>
</dbReference>
<dbReference type="SMR" id="B9V5F5"/>
<dbReference type="iPTMnet" id="B9V5F5"/>
<dbReference type="DNASU" id="496369"/>
<dbReference type="GeneID" id="496369"/>
<dbReference type="KEGG" id="xla:496369"/>
<dbReference type="AGR" id="Xenbase:XB-GENE-952551"/>
<dbReference type="CTD" id="496369"/>
<dbReference type="Xenbase" id="XB-GENE-952551">
    <property type="gene designation" value="cep63.L"/>
</dbReference>
<dbReference type="OrthoDB" id="10007333at2759"/>
<dbReference type="Proteomes" id="UP000186698">
    <property type="component" value="Chromosome 5L"/>
</dbReference>
<dbReference type="Bgee" id="496369">
    <property type="expression patterns" value="Expressed in egg cell and 19 other cell types or tissues"/>
</dbReference>
<dbReference type="GO" id="GO:0005814">
    <property type="term" value="C:centriole"/>
    <property type="evidence" value="ECO:0000250"/>
    <property type="project" value="UniProtKB"/>
</dbReference>
<dbReference type="GO" id="GO:0005813">
    <property type="term" value="C:centrosome"/>
    <property type="evidence" value="ECO:0000314"/>
    <property type="project" value="UniProtKB"/>
</dbReference>
<dbReference type="GO" id="GO:0005737">
    <property type="term" value="C:cytoplasm"/>
    <property type="evidence" value="ECO:0007669"/>
    <property type="project" value="UniProtKB-KW"/>
</dbReference>
<dbReference type="GO" id="GO:0000922">
    <property type="term" value="C:spindle pole"/>
    <property type="evidence" value="ECO:0000314"/>
    <property type="project" value="UniProtKB"/>
</dbReference>
<dbReference type="GO" id="GO:0051301">
    <property type="term" value="P:cell division"/>
    <property type="evidence" value="ECO:0007669"/>
    <property type="project" value="UniProtKB-KW"/>
</dbReference>
<dbReference type="GO" id="GO:0007099">
    <property type="term" value="P:centriole replication"/>
    <property type="evidence" value="ECO:0000250"/>
    <property type="project" value="UniProtKB"/>
</dbReference>
<dbReference type="GO" id="GO:0098535">
    <property type="term" value="P:de novo centriole assembly involved in multi-ciliated epithelial cell differentiation"/>
    <property type="evidence" value="ECO:0000318"/>
    <property type="project" value="GO_Central"/>
</dbReference>
<dbReference type="GO" id="GO:0000077">
    <property type="term" value="P:DNA damage checkpoint signaling"/>
    <property type="evidence" value="ECO:0000315"/>
    <property type="project" value="UniProtKB"/>
</dbReference>
<dbReference type="GO" id="GO:0042770">
    <property type="term" value="P:signal transduction in response to DNA damage"/>
    <property type="evidence" value="ECO:0000315"/>
    <property type="project" value="UniProtKB"/>
</dbReference>
<dbReference type="GO" id="GO:0051225">
    <property type="term" value="P:spindle assembly"/>
    <property type="evidence" value="ECO:0000315"/>
    <property type="project" value="UniProtKB"/>
</dbReference>
<dbReference type="InterPro" id="IPR031470">
    <property type="entry name" value="Cep63/Deup1_N"/>
</dbReference>
<dbReference type="PANTHER" id="PTHR18875:SF7">
    <property type="entry name" value="CENTROSOMAL PROTEIN OF 63 KDA"/>
    <property type="match status" value="1"/>
</dbReference>
<dbReference type="PANTHER" id="PTHR18875">
    <property type="entry name" value="SARCOMA ANTIGEN NY-SAR-24/CYTOSKELETAL PROTEIN SOJO"/>
    <property type="match status" value="1"/>
</dbReference>
<dbReference type="Pfam" id="PF17045">
    <property type="entry name" value="CEP63"/>
    <property type="match status" value="1"/>
</dbReference>
<reference key="1">
    <citation type="journal article" date="2009" name="Nat. Cell Biol.">
        <title>An ATM- and ATR-dependent checkpoint inactivates spindle assembly by targeting CEP63.</title>
        <authorList>
            <person name="Smith E."/>
            <person name="Dejsuphong D."/>
            <person name="Balestrini A."/>
            <person name="Hampel M."/>
            <person name="Lenz C."/>
            <person name="Takeda S."/>
            <person name="Vindigni A."/>
            <person name="Costanzo V."/>
        </authorList>
    </citation>
    <scope>NUCLEOTIDE SEQUENCE [MRNA]</scope>
    <scope>FUNCTION</scope>
    <scope>SUBCELLULAR LOCATION</scope>
    <scope>PHOSPHORYLATION AT SER-560</scope>
    <scope>MUTAGENESIS OF SER-560</scope>
</reference>
<accession>B9V5F5</accession>
<gene>
    <name type="primary">cep63-a</name>
    <name type="synonym">cep63</name>
</gene>
<sequence length="649" mass="75463">MEALLQGLQRQDRMGALQDSCEAELQELMKQIDIMLDHKRSQWEAETETMKTRLELKEQELNCALDREERLNQEVRRLRQQLIQQEEETQNKTTQYEAQLSGFKEELNRLKKSYEKVQKKHLRSEMKAKAEEERSEVSRLTRRLEEFRQRSLDWEKQRLLYQQQLAGLEAQRKTLIEQTEMYQHQSHNRKQMLEQTSLVGRSELQNLSGQLHRANDSLCAKEEELETLKIQLRCAVEGQKRAEHETELSKQAVQALKEEKAELRATLQAHTEFLQGSRVQKHELLPEGYRGSEVLRENNSIRSVEERLQEMGQVGGETEVEAIRSKLSVSRMNEHRLQAEVTCLEDSVESVTSQCQLLAKELKGKEEYFHGVKEDHQKCLSENKKLKGQLSQAELTHKSVLDGMRKEISQLTQELHQRDIRMASSAGIDWERKIKAERQRAEREAAEHRMSLNALENLRQENCRLSELLQTQEPDVAQALVNLEQANQRLQRELLQTQEKLELIAQRRESEIQNAVDSISQELLNKQEQELRIMQERLKVYEQEMQTFRSQQDAASSGSSLESIFSEVWKEQATGSPISAASVDSAIEPVEDLASSLPVPPTSPANAVASRFLQEEEQRSHELLQRLNAHIEELKQESQRTVEHFTQAR</sequence>
<protein>
    <recommendedName>
        <fullName>Centrosomal protein of 63 kDa-A</fullName>
        <shortName>Cep63-A</shortName>
        <shortName>Xcep63</shortName>
    </recommendedName>
</protein>
<organism>
    <name type="scientific">Xenopus laevis</name>
    <name type="common">African clawed frog</name>
    <dbReference type="NCBI Taxonomy" id="8355"/>
    <lineage>
        <taxon>Eukaryota</taxon>
        <taxon>Metazoa</taxon>
        <taxon>Chordata</taxon>
        <taxon>Craniata</taxon>
        <taxon>Vertebrata</taxon>
        <taxon>Euteleostomi</taxon>
        <taxon>Amphibia</taxon>
        <taxon>Batrachia</taxon>
        <taxon>Anura</taxon>
        <taxon>Pipoidea</taxon>
        <taxon>Pipidae</taxon>
        <taxon>Xenopodinae</taxon>
        <taxon>Xenopus</taxon>
        <taxon>Xenopus</taxon>
    </lineage>
</organism>